<proteinExistence type="evidence at transcript level"/>
<accession>A0FKG7</accession>
<reference key="1">
    <citation type="submission" date="2006-09" db="EMBL/GenBank/DDBJ databases">
        <title>The cloning and sequence analysis of pig CAPN7.</title>
        <authorList>
            <person name="Yang X.Q."/>
            <person name="Yu H."/>
            <person name="Guo L.J."/>
            <person name="Liu D."/>
        </authorList>
    </citation>
    <scope>NUCLEOTIDE SEQUENCE [MRNA]</scope>
</reference>
<name>CAN7_PIG</name>
<gene>
    <name type="primary">CAPN7</name>
</gene>
<feature type="chain" id="PRO_0000270513" description="Calpain-7">
    <location>
        <begin position="1"/>
        <end position="813"/>
    </location>
</feature>
<feature type="domain" description="Calpain catalytic" evidence="3">
    <location>
        <begin position="232"/>
        <end position="540"/>
    </location>
</feature>
<feature type="region of interest" description="Domain III">
    <location>
        <begin position="541"/>
        <end position="701"/>
    </location>
</feature>
<feature type="region of interest" description="Domain N">
    <location>
        <begin position="702"/>
        <end position="813"/>
    </location>
</feature>
<feature type="active site" evidence="3">
    <location>
        <position position="290"/>
    </location>
</feature>
<feature type="active site" evidence="3">
    <location>
        <position position="458"/>
    </location>
</feature>
<feature type="active site" evidence="3">
    <location>
        <position position="478"/>
    </location>
</feature>
<feature type="modified residue" description="N-acetylmethionine" evidence="2">
    <location>
        <position position="1"/>
    </location>
</feature>
<feature type="modified residue" description="Phosphothreonine" evidence="2">
    <location>
        <position position="95"/>
    </location>
</feature>
<comment type="function">
    <text evidence="1">Calcium-regulated non-lysosomal thiol-protease.</text>
</comment>
<comment type="subcellular location">
    <subcellularLocation>
        <location evidence="1">Nucleus</location>
    </subcellularLocation>
</comment>
<comment type="similarity">
    <text evidence="4">Belongs to the peptidase C2 family.</text>
</comment>
<protein>
    <recommendedName>
        <fullName>Calpain-7</fullName>
        <ecNumber>3.4.22.-</ecNumber>
    </recommendedName>
</protein>
<keyword id="KW-0007">Acetylation</keyword>
<keyword id="KW-0378">Hydrolase</keyword>
<keyword id="KW-0539">Nucleus</keyword>
<keyword id="KW-0597">Phosphoprotein</keyword>
<keyword id="KW-0645">Protease</keyword>
<keyword id="KW-1185">Reference proteome</keyword>
<keyword id="KW-0677">Repeat</keyword>
<keyword id="KW-0788">Thiol protease</keyword>
<dbReference type="EC" id="3.4.22.-"/>
<dbReference type="EMBL" id="EF026106">
    <property type="protein sequence ID" value="ABK20170.1"/>
    <property type="molecule type" value="mRNA"/>
</dbReference>
<dbReference type="RefSeq" id="NP_001090912.1">
    <property type="nucleotide sequence ID" value="NM_001097443.1"/>
</dbReference>
<dbReference type="SMR" id="A0FKG7"/>
<dbReference type="FunCoup" id="A0FKG7">
    <property type="interactions" value="2256"/>
</dbReference>
<dbReference type="STRING" id="9823.ENSSSCP00000021370"/>
<dbReference type="MEROPS" id="C02.029"/>
<dbReference type="PaxDb" id="9823-ENSSSCP00000021370"/>
<dbReference type="GeneID" id="100037936"/>
<dbReference type="KEGG" id="ssc:100037936"/>
<dbReference type="CTD" id="23473"/>
<dbReference type="eggNOG" id="KOG0045">
    <property type="taxonomic scope" value="Eukaryota"/>
</dbReference>
<dbReference type="InParanoid" id="A0FKG7"/>
<dbReference type="OrthoDB" id="167576at2759"/>
<dbReference type="Proteomes" id="UP000008227">
    <property type="component" value="Unplaced"/>
</dbReference>
<dbReference type="Proteomes" id="UP000314985">
    <property type="component" value="Unplaced"/>
</dbReference>
<dbReference type="Proteomes" id="UP000694570">
    <property type="component" value="Unplaced"/>
</dbReference>
<dbReference type="Proteomes" id="UP000694571">
    <property type="component" value="Unplaced"/>
</dbReference>
<dbReference type="Proteomes" id="UP000694720">
    <property type="component" value="Unplaced"/>
</dbReference>
<dbReference type="Proteomes" id="UP000694722">
    <property type="component" value="Unplaced"/>
</dbReference>
<dbReference type="Proteomes" id="UP000694723">
    <property type="component" value="Unplaced"/>
</dbReference>
<dbReference type="Proteomes" id="UP000694724">
    <property type="component" value="Unplaced"/>
</dbReference>
<dbReference type="Proteomes" id="UP000694725">
    <property type="component" value="Unplaced"/>
</dbReference>
<dbReference type="Proteomes" id="UP000694726">
    <property type="component" value="Unplaced"/>
</dbReference>
<dbReference type="Proteomes" id="UP000694727">
    <property type="component" value="Unplaced"/>
</dbReference>
<dbReference type="Proteomes" id="UP000694728">
    <property type="component" value="Unplaced"/>
</dbReference>
<dbReference type="GO" id="GO:0005634">
    <property type="term" value="C:nucleus"/>
    <property type="evidence" value="ECO:0007669"/>
    <property type="project" value="UniProtKB-SubCell"/>
</dbReference>
<dbReference type="GO" id="GO:0004198">
    <property type="term" value="F:calcium-dependent cysteine-type endopeptidase activity"/>
    <property type="evidence" value="ECO:0007669"/>
    <property type="project" value="InterPro"/>
</dbReference>
<dbReference type="GO" id="GO:0004197">
    <property type="term" value="F:cysteine-type endopeptidase activity"/>
    <property type="evidence" value="ECO:0000318"/>
    <property type="project" value="GO_Central"/>
</dbReference>
<dbReference type="GO" id="GO:0006508">
    <property type="term" value="P:proteolysis"/>
    <property type="evidence" value="ECO:0000318"/>
    <property type="project" value="GO_Central"/>
</dbReference>
<dbReference type="CDD" id="cd00044">
    <property type="entry name" value="CysPc"/>
    <property type="match status" value="1"/>
</dbReference>
<dbReference type="CDD" id="cd02681">
    <property type="entry name" value="MIT_calpain7_1"/>
    <property type="match status" value="1"/>
</dbReference>
<dbReference type="FunFam" id="2.60.120.380:FF:000007">
    <property type="entry name" value="Calpain 7"/>
    <property type="match status" value="1"/>
</dbReference>
<dbReference type="FunFam" id="3.90.70.10:FF:000069">
    <property type="entry name" value="Calpain 7"/>
    <property type="match status" value="1"/>
</dbReference>
<dbReference type="Gene3D" id="2.60.120.380">
    <property type="match status" value="2"/>
</dbReference>
<dbReference type="Gene3D" id="3.90.70.10">
    <property type="entry name" value="Cysteine proteinases"/>
    <property type="match status" value="1"/>
</dbReference>
<dbReference type="Gene3D" id="1.20.58.80">
    <property type="entry name" value="Phosphotransferase system, lactose/cellobiose-type IIA subunit"/>
    <property type="match status" value="2"/>
</dbReference>
<dbReference type="InterPro" id="IPR022684">
    <property type="entry name" value="Calpain_cysteine_protease"/>
</dbReference>
<dbReference type="InterPro" id="IPR022682">
    <property type="entry name" value="Calpain_domain_III"/>
</dbReference>
<dbReference type="InterPro" id="IPR022683">
    <property type="entry name" value="Calpain_III"/>
</dbReference>
<dbReference type="InterPro" id="IPR036213">
    <property type="entry name" value="Calpain_III_sf"/>
</dbReference>
<dbReference type="InterPro" id="IPR007330">
    <property type="entry name" value="MIT_dom"/>
</dbReference>
<dbReference type="InterPro" id="IPR036181">
    <property type="entry name" value="MIT_dom_sf"/>
</dbReference>
<dbReference type="InterPro" id="IPR051297">
    <property type="entry name" value="PalB/RIM13_Calpain-like"/>
</dbReference>
<dbReference type="InterPro" id="IPR038765">
    <property type="entry name" value="Papain-like_cys_pep_sf"/>
</dbReference>
<dbReference type="InterPro" id="IPR001300">
    <property type="entry name" value="Peptidase_C2_calpain_cat"/>
</dbReference>
<dbReference type="PANTHER" id="PTHR46143">
    <property type="entry name" value="CALPAIN-7"/>
    <property type="match status" value="1"/>
</dbReference>
<dbReference type="PANTHER" id="PTHR46143:SF1">
    <property type="entry name" value="CALPAIN-7"/>
    <property type="match status" value="1"/>
</dbReference>
<dbReference type="Pfam" id="PF01067">
    <property type="entry name" value="Calpain_III"/>
    <property type="match status" value="1"/>
</dbReference>
<dbReference type="Pfam" id="PF04212">
    <property type="entry name" value="MIT"/>
    <property type="match status" value="2"/>
</dbReference>
<dbReference type="Pfam" id="PF00648">
    <property type="entry name" value="Peptidase_C2"/>
    <property type="match status" value="1"/>
</dbReference>
<dbReference type="PRINTS" id="PR00704">
    <property type="entry name" value="CALPAIN"/>
</dbReference>
<dbReference type="SMART" id="SM00720">
    <property type="entry name" value="calpain_III"/>
    <property type="match status" value="1"/>
</dbReference>
<dbReference type="SMART" id="SM00230">
    <property type="entry name" value="CysPc"/>
    <property type="match status" value="1"/>
</dbReference>
<dbReference type="SMART" id="SM00745">
    <property type="entry name" value="MIT"/>
    <property type="match status" value="2"/>
</dbReference>
<dbReference type="SUPFAM" id="SSF49758">
    <property type="entry name" value="Calpain large subunit, middle domain (domain III)"/>
    <property type="match status" value="2"/>
</dbReference>
<dbReference type="SUPFAM" id="SSF54001">
    <property type="entry name" value="Cysteine proteinases"/>
    <property type="match status" value="1"/>
</dbReference>
<dbReference type="SUPFAM" id="SSF116846">
    <property type="entry name" value="MIT domain"/>
    <property type="match status" value="2"/>
</dbReference>
<dbReference type="PROSITE" id="PS50203">
    <property type="entry name" value="CALPAIN_CAT"/>
    <property type="match status" value="1"/>
</dbReference>
<organism>
    <name type="scientific">Sus scrofa</name>
    <name type="common">Pig</name>
    <dbReference type="NCBI Taxonomy" id="9823"/>
    <lineage>
        <taxon>Eukaryota</taxon>
        <taxon>Metazoa</taxon>
        <taxon>Chordata</taxon>
        <taxon>Craniata</taxon>
        <taxon>Vertebrata</taxon>
        <taxon>Euteleostomi</taxon>
        <taxon>Mammalia</taxon>
        <taxon>Eutheria</taxon>
        <taxon>Laurasiatheria</taxon>
        <taxon>Artiodactyla</taxon>
        <taxon>Suina</taxon>
        <taxon>Suidae</taxon>
        <taxon>Sus</taxon>
    </lineage>
</organism>
<evidence type="ECO:0000250" key="1"/>
<evidence type="ECO:0000250" key="2">
    <source>
        <dbReference type="UniProtKB" id="Q9Y6W3"/>
    </source>
</evidence>
<evidence type="ECO:0000255" key="3">
    <source>
        <dbReference type="PROSITE-ProRule" id="PRU00239"/>
    </source>
</evidence>
<evidence type="ECO:0000305" key="4"/>
<sequence>MDAAALERDAVQFARLAVQRDHEGRYSGAVFYYKEAAQALIYAEMAGSSLEHIQEKINEYLERVQALHSAVQSKSADPLKSKHQLDLERAHLLVTQAFDEDEKGNVEDAIELYTEAVDLCLKTSYETADKTLQNKLKQLARQALDRAEALSEPLTKPLCKVKATNIKPKPPPTRTHFPLGTNPFQEGPQPFISPQSCDAQGQRYTAEEIEVLRTTSKINGIEYVPFMNIDLRERFAYPMPFCDRCGKLPLSPKQKAMFSKWVRPEDLTNNPTMIYTVSSFSIKQTIVSDCSFVASLAISAAYERRFTKKLITSIIYPQNKDGESEYNPCGKYMVKLHLNGVPRKVIIDDQLPVDHKGELLCSYSNNKSELWVSLIEKAYMKVMGGYDFPGSNSNIDLHALTGWIPERIAMHSDSQTFSKDNSFRMLYQRFHKGDVLITASTGVMTEAEGEKWGLVPTHAYAVLDIREFKGLRFIQLKNPWSHLRWKGRYSENDVKNWTPELQKYLNFDPRTPQKIDNGIFWISWDDLCQYYDVIYLSWNPGLLKESTCIHSTWDAKQGPVKDAYSLANNPQYKLEVQCPQGGAAVWVLLSRHITDKDDFANNREFITMVVYKTDGKKVYYPADPPPYIDGIRINSPHYLTKIKLTTPGTHTFTLVVSQYEKQNTIHYTVRVYSACSFTFSKIPSPYTVSKQINGKWSGQSAGGCGNFQETHKNNPIYQFHIEKSGPLLIELRGPRQYSVGFEVVTVSVVGDPGPHGFQRKSSGDYRCGFCYLELESIPAGIYNIIPSTFLPKQEGPFFLDFNSVIPIKTTQLQ</sequence>